<dbReference type="EMBL" id="CP000626">
    <property type="protein sequence ID" value="ABQ18868.1"/>
    <property type="molecule type" value="Genomic_DNA"/>
</dbReference>
<dbReference type="EMBL" id="CP001236">
    <property type="protein sequence ID" value="ACP11409.1"/>
    <property type="molecule type" value="Genomic_DNA"/>
</dbReference>
<dbReference type="RefSeq" id="WP_000448828.1">
    <property type="nucleotide sequence ID" value="NZ_JAACZH010000025.1"/>
</dbReference>
<dbReference type="SMR" id="A5EZS6"/>
<dbReference type="KEGG" id="vco:VC0395_0675"/>
<dbReference type="KEGG" id="vcr:VC395_A0575"/>
<dbReference type="PATRIC" id="fig|345073.21.peg.3317"/>
<dbReference type="eggNOG" id="COG2827">
    <property type="taxonomic scope" value="Bacteria"/>
</dbReference>
<dbReference type="HOGENOM" id="CLU_135650_0_1_6"/>
<dbReference type="OrthoDB" id="9797095at2"/>
<dbReference type="Proteomes" id="UP000000249">
    <property type="component" value="Chromosome 1"/>
</dbReference>
<dbReference type="CDD" id="cd10456">
    <property type="entry name" value="GIY-YIG_UPF0213"/>
    <property type="match status" value="1"/>
</dbReference>
<dbReference type="Gene3D" id="3.40.1440.10">
    <property type="entry name" value="GIY-YIG endonuclease"/>
    <property type="match status" value="1"/>
</dbReference>
<dbReference type="InterPro" id="IPR000305">
    <property type="entry name" value="GIY-YIG_endonuc"/>
</dbReference>
<dbReference type="InterPro" id="IPR035901">
    <property type="entry name" value="GIY-YIG_endonuc_sf"/>
</dbReference>
<dbReference type="InterPro" id="IPR050190">
    <property type="entry name" value="UPF0213_domain"/>
</dbReference>
<dbReference type="PANTHER" id="PTHR34477">
    <property type="entry name" value="UPF0213 PROTEIN YHBQ"/>
    <property type="match status" value="1"/>
</dbReference>
<dbReference type="PANTHER" id="PTHR34477:SF1">
    <property type="entry name" value="UPF0213 PROTEIN YHBQ"/>
    <property type="match status" value="1"/>
</dbReference>
<dbReference type="Pfam" id="PF01541">
    <property type="entry name" value="GIY-YIG"/>
    <property type="match status" value="1"/>
</dbReference>
<dbReference type="SUPFAM" id="SSF82771">
    <property type="entry name" value="GIY-YIG endonuclease"/>
    <property type="match status" value="1"/>
</dbReference>
<dbReference type="PROSITE" id="PS50164">
    <property type="entry name" value="GIY_YIG"/>
    <property type="match status" value="1"/>
</dbReference>
<name>Y675_VIBC3</name>
<comment type="similarity">
    <text evidence="2">Belongs to the UPF0213 family.</text>
</comment>
<accession>A5EZS6</accession>
<accession>C3M5J6</accession>
<reference key="1">
    <citation type="submission" date="2007-03" db="EMBL/GenBank/DDBJ databases">
        <authorList>
            <person name="Heidelberg J."/>
        </authorList>
    </citation>
    <scope>NUCLEOTIDE SEQUENCE [LARGE SCALE GENOMIC DNA]</scope>
    <source>
        <strain>ATCC 39541 / Classical Ogawa 395 / O395</strain>
    </source>
</reference>
<reference key="2">
    <citation type="journal article" date="2008" name="PLoS ONE">
        <title>A recalibrated molecular clock and independent origins for the cholera pandemic clones.</title>
        <authorList>
            <person name="Feng L."/>
            <person name="Reeves P.R."/>
            <person name="Lan R."/>
            <person name="Ren Y."/>
            <person name="Gao C."/>
            <person name="Zhou Z."/>
            <person name="Ren Y."/>
            <person name="Cheng J."/>
            <person name="Wang W."/>
            <person name="Wang J."/>
            <person name="Qian W."/>
            <person name="Li D."/>
            <person name="Wang L."/>
        </authorList>
    </citation>
    <scope>NUCLEOTIDE SEQUENCE [LARGE SCALE GENOMIC DNA]</scope>
    <source>
        <strain>ATCC 39541 / Classical Ogawa 395 / O395</strain>
    </source>
</reference>
<organism>
    <name type="scientific">Vibrio cholerae serotype O1 (strain ATCC 39541 / Classical Ogawa 395 / O395)</name>
    <dbReference type="NCBI Taxonomy" id="345073"/>
    <lineage>
        <taxon>Bacteria</taxon>
        <taxon>Pseudomonadati</taxon>
        <taxon>Pseudomonadota</taxon>
        <taxon>Gammaproteobacteria</taxon>
        <taxon>Vibrionales</taxon>
        <taxon>Vibrionaceae</taxon>
        <taxon>Vibrio</taxon>
    </lineage>
</organism>
<feature type="chain" id="PRO_1000072953" description="UPF0213 protein VC0395_0675/VC395_A0575">
    <location>
        <begin position="1"/>
        <end position="101"/>
    </location>
</feature>
<feature type="domain" description="GIY-YIG" evidence="1">
    <location>
        <begin position="9"/>
        <end position="85"/>
    </location>
</feature>
<evidence type="ECO:0000255" key="1">
    <source>
        <dbReference type="PROSITE-ProRule" id="PRU00977"/>
    </source>
</evidence>
<evidence type="ECO:0000305" key="2"/>
<protein>
    <recommendedName>
        <fullName>UPF0213 protein VC0395_0675/VC395_A0575</fullName>
    </recommendedName>
</protein>
<proteinExistence type="inferred from homology"/>
<sequence>METLAELPSPWFVYLVRCANNALYCGITTDVSRRFAQHQKGRGAKALRGKGPLELVWSLPVADGKSAALKLEYRIKALSKSQKEALVAGMARIDQLEIIFQ</sequence>
<gene>
    <name type="ordered locus">VC0395_0675</name>
    <name type="ordered locus">VC395_A0575</name>
</gene>